<evidence type="ECO:0000255" key="1">
    <source>
        <dbReference type="HAMAP-Rule" id="MF_01104"/>
    </source>
</evidence>
<gene>
    <name evidence="1" type="primary">syd</name>
    <name type="ordered locus">EcHS_A2937</name>
</gene>
<sequence length="181" mass="20708">MDDLTAQALKDFTARYCDAWHEEHKSWPLSEELYGVPSPCIISTTEDAVYWQPQPFTGEQNVNAVERAFDIVIQPTIHTFYTTQFAGDMHAQFGDIKLTLLQTWSEDDFRRVQENLIGHLVTQKRLKLPPTLFIATLEEELEVISVCNLSGEVCKETLGTRKRTHLASNLAEFLNQLKPLL</sequence>
<comment type="function">
    <text evidence="1">Interacts with the SecY protein in vivo. May bind preferentially to an uncomplexed state of SecY, thus functioning either as a chelating agent for excess SecY in the cell or as a regulatory factor that negatively controls the translocase function.</text>
</comment>
<comment type="subcellular location">
    <subcellularLocation>
        <location evidence="1">Cell inner membrane</location>
        <topology evidence="1">Peripheral membrane protein</topology>
        <orientation evidence="1">Cytoplasmic side</orientation>
    </subcellularLocation>
    <text evidence="1">Loosely associated with the cytoplasmic side of the inner membrane, probably via SecY.</text>
</comment>
<comment type="similarity">
    <text evidence="1">Belongs to the Syd family.</text>
</comment>
<reference key="1">
    <citation type="journal article" date="2008" name="J. Bacteriol.">
        <title>The pangenome structure of Escherichia coli: comparative genomic analysis of E. coli commensal and pathogenic isolates.</title>
        <authorList>
            <person name="Rasko D.A."/>
            <person name="Rosovitz M.J."/>
            <person name="Myers G.S.A."/>
            <person name="Mongodin E.F."/>
            <person name="Fricke W.F."/>
            <person name="Gajer P."/>
            <person name="Crabtree J."/>
            <person name="Sebaihia M."/>
            <person name="Thomson N.R."/>
            <person name="Chaudhuri R."/>
            <person name="Henderson I.R."/>
            <person name="Sperandio V."/>
            <person name="Ravel J."/>
        </authorList>
    </citation>
    <scope>NUCLEOTIDE SEQUENCE [LARGE SCALE GENOMIC DNA]</scope>
    <source>
        <strain>HS</strain>
    </source>
</reference>
<name>SYDP_ECOHS</name>
<accession>A8A3S8</accession>
<dbReference type="EMBL" id="CP000802">
    <property type="protein sequence ID" value="ABV07182.1"/>
    <property type="molecule type" value="Genomic_DNA"/>
</dbReference>
<dbReference type="RefSeq" id="WP_000342431.1">
    <property type="nucleotide sequence ID" value="NC_009800.1"/>
</dbReference>
<dbReference type="SMR" id="A8A3S8"/>
<dbReference type="GeneID" id="93779205"/>
<dbReference type="KEGG" id="ecx:EcHS_A2937"/>
<dbReference type="HOGENOM" id="CLU_121866_0_0_6"/>
<dbReference type="GO" id="GO:0009898">
    <property type="term" value="C:cytoplasmic side of plasma membrane"/>
    <property type="evidence" value="ECO:0007669"/>
    <property type="project" value="InterPro"/>
</dbReference>
<dbReference type="CDD" id="cd16323">
    <property type="entry name" value="Syd"/>
    <property type="match status" value="1"/>
</dbReference>
<dbReference type="FunFam" id="3.40.1580.20:FF:000001">
    <property type="entry name" value="Protein Syd"/>
    <property type="match status" value="1"/>
</dbReference>
<dbReference type="Gene3D" id="3.40.1580.20">
    <property type="entry name" value="Syd protein"/>
    <property type="match status" value="1"/>
</dbReference>
<dbReference type="HAMAP" id="MF_01104">
    <property type="entry name" value="Syd"/>
    <property type="match status" value="1"/>
</dbReference>
<dbReference type="InterPro" id="IPR009948">
    <property type="entry name" value="Syd"/>
</dbReference>
<dbReference type="InterPro" id="IPR038228">
    <property type="entry name" value="Syd_sf"/>
</dbReference>
<dbReference type="NCBIfam" id="NF003439">
    <property type="entry name" value="PRK04968.1"/>
    <property type="match status" value="1"/>
</dbReference>
<dbReference type="Pfam" id="PF07348">
    <property type="entry name" value="Syd"/>
    <property type="match status" value="1"/>
</dbReference>
<protein>
    <recommendedName>
        <fullName evidence="1">Protein Syd</fullName>
    </recommendedName>
</protein>
<organism>
    <name type="scientific">Escherichia coli O9:H4 (strain HS)</name>
    <dbReference type="NCBI Taxonomy" id="331112"/>
    <lineage>
        <taxon>Bacteria</taxon>
        <taxon>Pseudomonadati</taxon>
        <taxon>Pseudomonadota</taxon>
        <taxon>Gammaproteobacteria</taxon>
        <taxon>Enterobacterales</taxon>
        <taxon>Enterobacteriaceae</taxon>
        <taxon>Escherichia</taxon>
    </lineage>
</organism>
<keyword id="KW-0997">Cell inner membrane</keyword>
<keyword id="KW-1003">Cell membrane</keyword>
<keyword id="KW-0472">Membrane</keyword>
<proteinExistence type="inferred from homology"/>
<feature type="chain" id="PRO_1000065039" description="Protein Syd">
    <location>
        <begin position="1"/>
        <end position="181"/>
    </location>
</feature>